<proteinExistence type="evidence at protein level"/>
<comment type="function">
    <text evidence="2">Functions as a transcription repressor, probably via its interaction with histone deacetylase complexes. Involved in the functional recruitment of the class 1 Sin3-histone deacetylase complex (HDAC) to the nucleolus. Binds DNA, apparently without sequence-specificity, and bends bound double-stranded DNA. Binds phosphoinositol phosphates (phosphoinositol 3-phosphate, phosphoinositol 4-phosphate and phosphoinositol 5-phosphate) via the same basic sequence motif that mediates DNA binding and nuclear import.</text>
</comment>
<comment type="subunit">
    <text evidence="2">Interacts with components of the histone deacetylase complex SIN3A, HDAC1 and HDAC2. Binds histones and nucleosomes. Interacts with FEZ1.</text>
</comment>
<comment type="subcellular location">
    <subcellularLocation>
        <location evidence="2">Nucleus</location>
        <location evidence="2">Nucleolus</location>
    </subcellularLocation>
</comment>
<comment type="domain">
    <text evidence="2">The zinc-finger domain mediates direct interaction with DNA and phosphoinositol phosphates (phosphoinositol 3-phosphate, phosphoinositol 4-phosphate and phosphoinositol 5-phosphate). In vitro oxydation causes reversible disulfide bond formation between Cys residues in the zinc-finger domain and reversible loss of zinc ion binding.</text>
</comment>
<comment type="similarity">
    <text evidence="5">Belongs to the SAP30 family.</text>
</comment>
<comment type="sequence caution" evidence="5">
    <conflict type="erroneous initiation">
        <sequence resource="EMBL-CDS" id="AAH94930"/>
    </conflict>
</comment>
<accession>Q5SQF8</accession>
<accession>Q504M9</accession>
<accession>Q9CUZ7</accession>
<organism>
    <name type="scientific">Mus musculus</name>
    <name type="common">Mouse</name>
    <dbReference type="NCBI Taxonomy" id="10090"/>
    <lineage>
        <taxon>Eukaryota</taxon>
        <taxon>Metazoa</taxon>
        <taxon>Chordata</taxon>
        <taxon>Craniata</taxon>
        <taxon>Vertebrata</taxon>
        <taxon>Euteleostomi</taxon>
        <taxon>Mammalia</taxon>
        <taxon>Eutheria</taxon>
        <taxon>Euarchontoglires</taxon>
        <taxon>Glires</taxon>
        <taxon>Rodentia</taxon>
        <taxon>Myomorpha</taxon>
        <taxon>Muroidea</taxon>
        <taxon>Muridae</taxon>
        <taxon>Murinae</taxon>
        <taxon>Mus</taxon>
        <taxon>Mus</taxon>
    </lineage>
</organism>
<reference key="1">
    <citation type="journal article" date="2009" name="PLoS Biol.">
        <title>Lineage-specific biology revealed by a finished genome assembly of the mouse.</title>
        <authorList>
            <person name="Church D.M."/>
            <person name="Goodstadt L."/>
            <person name="Hillier L.W."/>
            <person name="Zody M.C."/>
            <person name="Goldstein S."/>
            <person name="She X."/>
            <person name="Bult C.J."/>
            <person name="Agarwala R."/>
            <person name="Cherry J.L."/>
            <person name="DiCuccio M."/>
            <person name="Hlavina W."/>
            <person name="Kapustin Y."/>
            <person name="Meric P."/>
            <person name="Maglott D."/>
            <person name="Birtle Z."/>
            <person name="Marques A.C."/>
            <person name="Graves T."/>
            <person name="Zhou S."/>
            <person name="Teague B."/>
            <person name="Potamousis K."/>
            <person name="Churas C."/>
            <person name="Place M."/>
            <person name="Herschleb J."/>
            <person name="Runnheim R."/>
            <person name="Forrest D."/>
            <person name="Amos-Landgraf J."/>
            <person name="Schwartz D.C."/>
            <person name="Cheng Z."/>
            <person name="Lindblad-Toh K."/>
            <person name="Eichler E.E."/>
            <person name="Ponting C.P."/>
        </authorList>
    </citation>
    <scope>NUCLEOTIDE SEQUENCE [LARGE SCALE GENOMIC DNA]</scope>
    <source>
        <strain>C57BL/6J</strain>
    </source>
</reference>
<reference key="2">
    <citation type="journal article" date="2004" name="Genome Res.">
        <title>The status, quality, and expansion of the NIH full-length cDNA project: the Mammalian Gene Collection (MGC).</title>
        <authorList>
            <consortium name="The MGC Project Team"/>
        </authorList>
    </citation>
    <scope>NUCLEOTIDE SEQUENCE [LARGE SCALE MRNA]</scope>
    <source>
        <tissue>Brain</tissue>
        <tissue>Pancreas</tissue>
    </source>
</reference>
<reference key="3">
    <citation type="journal article" date="2005" name="Science">
        <title>The transcriptional landscape of the mammalian genome.</title>
        <authorList>
            <person name="Carninci P."/>
            <person name="Kasukawa T."/>
            <person name="Katayama S."/>
            <person name="Gough J."/>
            <person name="Frith M.C."/>
            <person name="Maeda N."/>
            <person name="Oyama R."/>
            <person name="Ravasi T."/>
            <person name="Lenhard B."/>
            <person name="Wells C."/>
            <person name="Kodzius R."/>
            <person name="Shimokawa K."/>
            <person name="Bajic V.B."/>
            <person name="Brenner S.E."/>
            <person name="Batalov S."/>
            <person name="Forrest A.R."/>
            <person name="Zavolan M."/>
            <person name="Davis M.J."/>
            <person name="Wilming L.G."/>
            <person name="Aidinis V."/>
            <person name="Allen J.E."/>
            <person name="Ambesi-Impiombato A."/>
            <person name="Apweiler R."/>
            <person name="Aturaliya R.N."/>
            <person name="Bailey T.L."/>
            <person name="Bansal M."/>
            <person name="Baxter L."/>
            <person name="Beisel K.W."/>
            <person name="Bersano T."/>
            <person name="Bono H."/>
            <person name="Chalk A.M."/>
            <person name="Chiu K.P."/>
            <person name="Choudhary V."/>
            <person name="Christoffels A."/>
            <person name="Clutterbuck D.R."/>
            <person name="Crowe M.L."/>
            <person name="Dalla E."/>
            <person name="Dalrymple B.P."/>
            <person name="de Bono B."/>
            <person name="Della Gatta G."/>
            <person name="di Bernardo D."/>
            <person name="Down T."/>
            <person name="Engstrom P."/>
            <person name="Fagiolini M."/>
            <person name="Faulkner G."/>
            <person name="Fletcher C.F."/>
            <person name="Fukushima T."/>
            <person name="Furuno M."/>
            <person name="Futaki S."/>
            <person name="Gariboldi M."/>
            <person name="Georgii-Hemming P."/>
            <person name="Gingeras T.R."/>
            <person name="Gojobori T."/>
            <person name="Green R.E."/>
            <person name="Gustincich S."/>
            <person name="Harbers M."/>
            <person name="Hayashi Y."/>
            <person name="Hensch T.K."/>
            <person name="Hirokawa N."/>
            <person name="Hill D."/>
            <person name="Huminiecki L."/>
            <person name="Iacono M."/>
            <person name="Ikeo K."/>
            <person name="Iwama A."/>
            <person name="Ishikawa T."/>
            <person name="Jakt M."/>
            <person name="Kanapin A."/>
            <person name="Katoh M."/>
            <person name="Kawasawa Y."/>
            <person name="Kelso J."/>
            <person name="Kitamura H."/>
            <person name="Kitano H."/>
            <person name="Kollias G."/>
            <person name="Krishnan S.P."/>
            <person name="Kruger A."/>
            <person name="Kummerfeld S.K."/>
            <person name="Kurochkin I.V."/>
            <person name="Lareau L.F."/>
            <person name="Lazarevic D."/>
            <person name="Lipovich L."/>
            <person name="Liu J."/>
            <person name="Liuni S."/>
            <person name="McWilliam S."/>
            <person name="Madan Babu M."/>
            <person name="Madera M."/>
            <person name="Marchionni L."/>
            <person name="Matsuda H."/>
            <person name="Matsuzawa S."/>
            <person name="Miki H."/>
            <person name="Mignone F."/>
            <person name="Miyake S."/>
            <person name="Morris K."/>
            <person name="Mottagui-Tabar S."/>
            <person name="Mulder N."/>
            <person name="Nakano N."/>
            <person name="Nakauchi H."/>
            <person name="Ng P."/>
            <person name="Nilsson R."/>
            <person name="Nishiguchi S."/>
            <person name="Nishikawa S."/>
            <person name="Nori F."/>
            <person name="Ohara O."/>
            <person name="Okazaki Y."/>
            <person name="Orlando V."/>
            <person name="Pang K.C."/>
            <person name="Pavan W.J."/>
            <person name="Pavesi G."/>
            <person name="Pesole G."/>
            <person name="Petrovsky N."/>
            <person name="Piazza S."/>
            <person name="Reed J."/>
            <person name="Reid J.F."/>
            <person name="Ring B.Z."/>
            <person name="Ringwald M."/>
            <person name="Rost B."/>
            <person name="Ruan Y."/>
            <person name="Salzberg S.L."/>
            <person name="Sandelin A."/>
            <person name="Schneider C."/>
            <person name="Schoenbach C."/>
            <person name="Sekiguchi K."/>
            <person name="Semple C.A."/>
            <person name="Seno S."/>
            <person name="Sessa L."/>
            <person name="Sheng Y."/>
            <person name="Shibata Y."/>
            <person name="Shimada H."/>
            <person name="Shimada K."/>
            <person name="Silva D."/>
            <person name="Sinclair B."/>
            <person name="Sperling S."/>
            <person name="Stupka E."/>
            <person name="Sugiura K."/>
            <person name="Sultana R."/>
            <person name="Takenaka Y."/>
            <person name="Taki K."/>
            <person name="Tammoja K."/>
            <person name="Tan S.L."/>
            <person name="Tang S."/>
            <person name="Taylor M.S."/>
            <person name="Tegner J."/>
            <person name="Teichmann S.A."/>
            <person name="Ueda H.R."/>
            <person name="van Nimwegen E."/>
            <person name="Verardo R."/>
            <person name="Wei C.L."/>
            <person name="Yagi K."/>
            <person name="Yamanishi H."/>
            <person name="Zabarovsky E."/>
            <person name="Zhu S."/>
            <person name="Zimmer A."/>
            <person name="Hide W."/>
            <person name="Bult C."/>
            <person name="Grimmond S.M."/>
            <person name="Teasdale R.D."/>
            <person name="Liu E.T."/>
            <person name="Brusic V."/>
            <person name="Quackenbush J."/>
            <person name="Wahlestedt C."/>
            <person name="Mattick J.S."/>
            <person name="Hume D.A."/>
            <person name="Kai C."/>
            <person name="Sasaki D."/>
            <person name="Tomaru Y."/>
            <person name="Fukuda S."/>
            <person name="Kanamori-Katayama M."/>
            <person name="Suzuki M."/>
            <person name="Aoki J."/>
            <person name="Arakawa T."/>
            <person name="Iida J."/>
            <person name="Imamura K."/>
            <person name="Itoh M."/>
            <person name="Kato T."/>
            <person name="Kawaji H."/>
            <person name="Kawagashira N."/>
            <person name="Kawashima T."/>
            <person name="Kojima M."/>
            <person name="Kondo S."/>
            <person name="Konno H."/>
            <person name="Nakano K."/>
            <person name="Ninomiya N."/>
            <person name="Nishio T."/>
            <person name="Okada M."/>
            <person name="Plessy C."/>
            <person name="Shibata K."/>
            <person name="Shiraki T."/>
            <person name="Suzuki S."/>
            <person name="Tagami M."/>
            <person name="Waki K."/>
            <person name="Watahiki A."/>
            <person name="Okamura-Oho Y."/>
            <person name="Suzuki H."/>
            <person name="Kawai J."/>
            <person name="Hayashizaki Y."/>
        </authorList>
    </citation>
    <scope>NUCLEOTIDE SEQUENCE [LARGE SCALE MRNA] OF 20-182</scope>
    <source>
        <strain>C57BL/6J</strain>
        <tissue>Tongue</tissue>
    </source>
</reference>
<reference key="4">
    <citation type="journal article" date="2007" name="Proc. Natl. Acad. Sci. U.S.A.">
        <title>Large-scale phosphorylation analysis of mouse liver.</title>
        <authorList>
            <person name="Villen J."/>
            <person name="Beausoleil S.A."/>
            <person name="Gerber S.A."/>
            <person name="Gygi S.P."/>
        </authorList>
    </citation>
    <scope>PHOSPHORYLATION [LARGE SCALE ANALYSIS] AT SER-92 AND SER-98</scope>
    <scope>IDENTIFICATION BY MASS SPECTROMETRY [LARGE SCALE ANALYSIS]</scope>
    <source>
        <tissue>Liver</tissue>
    </source>
</reference>
<reference key="5">
    <citation type="journal article" date="2010" name="Cell">
        <title>A tissue-specific atlas of mouse protein phosphorylation and expression.</title>
        <authorList>
            <person name="Huttlin E.L."/>
            <person name="Jedrychowski M.P."/>
            <person name="Elias J.E."/>
            <person name="Goswami T."/>
            <person name="Rad R."/>
            <person name="Beausoleil S.A."/>
            <person name="Villen J."/>
            <person name="Haas W."/>
            <person name="Sowa M.E."/>
            <person name="Gygi S.P."/>
        </authorList>
    </citation>
    <scope>PHOSPHORYLATION [LARGE SCALE ANALYSIS] AT SER-92 AND SER-98</scope>
    <scope>IDENTIFICATION BY MASS SPECTROMETRY [LARGE SCALE ANALYSIS]</scope>
    <source>
        <tissue>Brain</tissue>
        <tissue>Brown adipose tissue</tissue>
        <tissue>Kidney</tissue>
        <tissue>Liver</tissue>
        <tissue>Lung</tissue>
        <tissue>Pancreas</tissue>
        <tissue>Spleen</tissue>
        <tissue>Testis</tissue>
    </source>
</reference>
<dbReference type="EMBL" id="AL732587">
    <property type="status" value="NOT_ANNOTATED_CDS"/>
    <property type="molecule type" value="Genomic_DNA"/>
</dbReference>
<dbReference type="EMBL" id="BC051686">
    <property type="protein sequence ID" value="AAH51686.1"/>
    <property type="molecule type" value="mRNA"/>
</dbReference>
<dbReference type="EMBL" id="BC094930">
    <property type="protein sequence ID" value="AAH94930.1"/>
    <property type="status" value="ALT_INIT"/>
    <property type="molecule type" value="mRNA"/>
</dbReference>
<dbReference type="EMBL" id="BC117029">
    <property type="protein sequence ID" value="AAI17030.1"/>
    <property type="molecule type" value="mRNA"/>
</dbReference>
<dbReference type="EMBL" id="BC117031">
    <property type="protein sequence ID" value="AAI17032.1"/>
    <property type="molecule type" value="mRNA"/>
</dbReference>
<dbReference type="EMBL" id="AK010234">
    <property type="protein sequence ID" value="BAB26785.1"/>
    <property type="molecule type" value="mRNA"/>
</dbReference>
<dbReference type="CCDS" id="CCDS36160.1"/>
<dbReference type="RefSeq" id="NP_001074637.1">
    <property type="nucleotide sequence ID" value="NM_001081168.2"/>
</dbReference>
<dbReference type="SMR" id="Q5SQF8"/>
<dbReference type="ComplexPortal" id="CPX-3441">
    <property type="entry name" value="SIN3A histone deacetylase complex, ES cell-specific variant"/>
</dbReference>
<dbReference type="ComplexPortal" id="CPX-3443">
    <property type="entry name" value="SIN3A histone deacetylase complex"/>
</dbReference>
<dbReference type="ComplexPortal" id="CPX-3444">
    <property type="entry name" value="SIN3B histone deacetylase complex"/>
</dbReference>
<dbReference type="FunCoup" id="Q5SQF8">
    <property type="interactions" value="3590"/>
</dbReference>
<dbReference type="STRING" id="10090.ENSMUSP00000020826"/>
<dbReference type="iPTMnet" id="Q5SQF8"/>
<dbReference type="PhosphoSitePlus" id="Q5SQF8"/>
<dbReference type="PaxDb" id="10090-ENSMUSP00000020826"/>
<dbReference type="PeptideAtlas" id="Q5SQF8"/>
<dbReference type="ProteomicsDB" id="257549"/>
<dbReference type="Pumba" id="Q5SQF8"/>
<dbReference type="Antibodypedia" id="16444">
    <property type="antibodies" value="111 antibodies from 24 providers"/>
</dbReference>
<dbReference type="Ensembl" id="ENSMUST00000020826.6">
    <property type="protein sequence ID" value="ENSMUSP00000020826.6"/>
    <property type="gene ID" value="ENSMUSG00000020519.6"/>
</dbReference>
<dbReference type="GeneID" id="50724"/>
<dbReference type="KEGG" id="mmu:50724"/>
<dbReference type="UCSC" id="uc007jae.1">
    <property type="organism name" value="mouse"/>
</dbReference>
<dbReference type="AGR" id="MGI:1354709"/>
<dbReference type="CTD" id="79685"/>
<dbReference type="MGI" id="MGI:1354709">
    <property type="gene designation" value="Sap30l"/>
</dbReference>
<dbReference type="VEuPathDB" id="HostDB:ENSMUSG00000020519"/>
<dbReference type="eggNOG" id="ENOG502QWFH">
    <property type="taxonomic scope" value="Eukaryota"/>
</dbReference>
<dbReference type="GeneTree" id="ENSGT00390000006633"/>
<dbReference type="HOGENOM" id="CLU_097961_1_0_1"/>
<dbReference type="InParanoid" id="Q5SQF8"/>
<dbReference type="OMA" id="SDQICCL"/>
<dbReference type="OrthoDB" id="510958at2759"/>
<dbReference type="PhylomeDB" id="Q5SQF8"/>
<dbReference type="TreeFam" id="TF324135"/>
<dbReference type="Reactome" id="R-MMU-3214815">
    <property type="pathway name" value="HDACs deacetylate histones"/>
</dbReference>
<dbReference type="BioGRID-ORCS" id="50724">
    <property type="hits" value="3 hits in 78 CRISPR screens"/>
</dbReference>
<dbReference type="ChiTaRS" id="Sap30l">
    <property type="organism name" value="mouse"/>
</dbReference>
<dbReference type="PRO" id="PR:Q5SQF8"/>
<dbReference type="Proteomes" id="UP000000589">
    <property type="component" value="Chromosome 11"/>
</dbReference>
<dbReference type="RNAct" id="Q5SQF8">
    <property type="molecule type" value="protein"/>
</dbReference>
<dbReference type="Bgee" id="ENSMUSG00000020519">
    <property type="expression patterns" value="Expressed in cleaving embryo and 266 other cell types or tissues"/>
</dbReference>
<dbReference type="GO" id="GO:0001650">
    <property type="term" value="C:fibrillar center"/>
    <property type="evidence" value="ECO:0007669"/>
    <property type="project" value="Ensembl"/>
</dbReference>
<dbReference type="GO" id="GO:0000118">
    <property type="term" value="C:histone deacetylase complex"/>
    <property type="evidence" value="ECO:0000250"/>
    <property type="project" value="UniProtKB"/>
</dbReference>
<dbReference type="GO" id="GO:0005730">
    <property type="term" value="C:nucleolus"/>
    <property type="evidence" value="ECO:0000250"/>
    <property type="project" value="UniProtKB"/>
</dbReference>
<dbReference type="GO" id="GO:0005634">
    <property type="term" value="C:nucleus"/>
    <property type="evidence" value="ECO:0000303"/>
    <property type="project" value="ComplexPortal"/>
</dbReference>
<dbReference type="GO" id="GO:0070822">
    <property type="term" value="C:Sin3-type complex"/>
    <property type="evidence" value="ECO:0000303"/>
    <property type="project" value="ComplexPortal"/>
</dbReference>
<dbReference type="GO" id="GO:0003677">
    <property type="term" value="F:DNA binding"/>
    <property type="evidence" value="ECO:0000250"/>
    <property type="project" value="UniProtKB"/>
</dbReference>
<dbReference type="GO" id="GO:0042393">
    <property type="term" value="F:histone binding"/>
    <property type="evidence" value="ECO:0000250"/>
    <property type="project" value="UniProtKB"/>
</dbReference>
<dbReference type="GO" id="GO:0044378">
    <property type="term" value="F:non-sequence-specific DNA binding, bending"/>
    <property type="evidence" value="ECO:0000250"/>
    <property type="project" value="UniProtKB"/>
</dbReference>
<dbReference type="GO" id="GO:0031491">
    <property type="term" value="F:nucleosome binding"/>
    <property type="evidence" value="ECO:0000250"/>
    <property type="project" value="UniProtKB"/>
</dbReference>
<dbReference type="GO" id="GO:0032266">
    <property type="term" value="F:phosphatidylinositol-3-phosphate binding"/>
    <property type="evidence" value="ECO:0000250"/>
    <property type="project" value="UniProtKB"/>
</dbReference>
<dbReference type="GO" id="GO:0070273">
    <property type="term" value="F:phosphatidylinositol-4-phosphate binding"/>
    <property type="evidence" value="ECO:0000250"/>
    <property type="project" value="UniProtKB"/>
</dbReference>
<dbReference type="GO" id="GO:0010314">
    <property type="term" value="F:phosphatidylinositol-5-phosphate binding"/>
    <property type="evidence" value="ECO:0000250"/>
    <property type="project" value="UniProtKB"/>
</dbReference>
<dbReference type="GO" id="GO:0008270">
    <property type="term" value="F:zinc ion binding"/>
    <property type="evidence" value="ECO:0000250"/>
    <property type="project" value="UniProtKB"/>
</dbReference>
<dbReference type="GO" id="GO:0030336">
    <property type="term" value="P:negative regulation of cell migration"/>
    <property type="evidence" value="ECO:0000303"/>
    <property type="project" value="ComplexPortal"/>
</dbReference>
<dbReference type="GO" id="GO:1902455">
    <property type="term" value="P:negative regulation of stem cell population maintenance"/>
    <property type="evidence" value="ECO:0000303"/>
    <property type="project" value="ComplexPortal"/>
</dbReference>
<dbReference type="GO" id="GO:0000122">
    <property type="term" value="P:negative regulation of transcription by RNA polymerase II"/>
    <property type="evidence" value="ECO:0000250"/>
    <property type="project" value="UniProtKB"/>
</dbReference>
<dbReference type="GO" id="GO:0030512">
    <property type="term" value="P:negative regulation of transforming growth factor beta receptor signaling pathway"/>
    <property type="evidence" value="ECO:0000303"/>
    <property type="project" value="ComplexPortal"/>
</dbReference>
<dbReference type="GO" id="GO:1902459">
    <property type="term" value="P:positive regulation of stem cell population maintenance"/>
    <property type="evidence" value="ECO:0000303"/>
    <property type="project" value="ComplexPortal"/>
</dbReference>
<dbReference type="FunFam" id="3.40.1800.30:FF:000001">
    <property type="entry name" value="Histone deacetylase complex subunit"/>
    <property type="match status" value="1"/>
</dbReference>
<dbReference type="Gene3D" id="3.40.1800.30">
    <property type="match status" value="1"/>
</dbReference>
<dbReference type="Gene3D" id="6.10.160.20">
    <property type="match status" value="1"/>
</dbReference>
<dbReference type="InterPro" id="IPR024145">
    <property type="entry name" value="His_deAcase_SAP30/SAP30L"/>
</dbReference>
<dbReference type="InterPro" id="IPR038291">
    <property type="entry name" value="SAP30_C_sf"/>
</dbReference>
<dbReference type="InterPro" id="IPR025718">
    <property type="entry name" value="SAP30_Sin3-bd"/>
</dbReference>
<dbReference type="InterPro" id="IPR025717">
    <property type="entry name" value="SAP30_zn-finger"/>
</dbReference>
<dbReference type="PANTHER" id="PTHR13286:SF5">
    <property type="entry name" value="HISTONE DEACETYLASE COMPLEX SUBUNIT SAP30L"/>
    <property type="match status" value="1"/>
</dbReference>
<dbReference type="PANTHER" id="PTHR13286">
    <property type="entry name" value="SAP30"/>
    <property type="match status" value="1"/>
</dbReference>
<dbReference type="Pfam" id="PF13867">
    <property type="entry name" value="SAP30_Sin3_bdg"/>
    <property type="match status" value="1"/>
</dbReference>
<dbReference type="Pfam" id="PF13866">
    <property type="entry name" value="zf-SAP30"/>
    <property type="match status" value="1"/>
</dbReference>
<keyword id="KW-0007">Acetylation</keyword>
<keyword id="KW-1015">Disulfide bond</keyword>
<keyword id="KW-0238">DNA-binding</keyword>
<keyword id="KW-1017">Isopeptide bond</keyword>
<keyword id="KW-0446">Lipid-binding</keyword>
<keyword id="KW-0479">Metal-binding</keyword>
<keyword id="KW-0539">Nucleus</keyword>
<keyword id="KW-0597">Phosphoprotein</keyword>
<keyword id="KW-1185">Reference proteome</keyword>
<keyword id="KW-0678">Repressor</keyword>
<keyword id="KW-0804">Transcription</keyword>
<keyword id="KW-0805">Transcription regulation</keyword>
<keyword id="KW-0832">Ubl conjugation</keyword>
<keyword id="KW-0862">Zinc</keyword>
<keyword id="KW-0863">Zinc-finger</keyword>
<feature type="chain" id="PRO_0000309501" description="Histone deacetylase complex subunit SAP30L">
    <location>
        <begin position="1"/>
        <end position="182"/>
    </location>
</feature>
<feature type="zinc finger region" description="Atypical">
    <location>
        <begin position="28"/>
        <end position="76"/>
    </location>
</feature>
<feature type="region of interest" description="Disordered" evidence="4">
    <location>
        <begin position="1"/>
        <end position="22"/>
    </location>
</feature>
<feature type="region of interest" description="Disordered" evidence="4">
    <location>
        <begin position="84"/>
        <end position="103"/>
    </location>
</feature>
<feature type="region of interest" description="Important for DNA and phosphoinositide binding" evidence="2">
    <location>
        <begin position="87"/>
        <end position="89"/>
    </location>
</feature>
<feature type="short sequence motif" description="Nuclear localization signal (NLS)" evidence="2">
    <location>
        <begin position="85"/>
        <end position="90"/>
    </location>
</feature>
<feature type="compositionally biased region" description="Acidic residues" evidence="4">
    <location>
        <begin position="1"/>
        <end position="10"/>
    </location>
</feature>
<feature type="modified residue" description="N-acetylmethionine" evidence="2">
    <location>
        <position position="1"/>
    </location>
</feature>
<feature type="modified residue" description="Phosphoserine" evidence="6 7">
    <location>
        <position position="92"/>
    </location>
</feature>
<feature type="modified residue" description="Phosphoserine" evidence="6 7">
    <location>
        <position position="98"/>
    </location>
</feature>
<feature type="disulfide bond" description="Redox-active" evidence="3">
    <location>
        <begin position="28"/>
        <end position="29"/>
    </location>
</feature>
<feature type="disulfide bond" description="Redox-active" evidence="3">
    <location>
        <begin position="37"/>
        <end position="73"/>
    </location>
</feature>
<feature type="cross-link" description="Glycyl lysine isopeptide (Lys-Gly) (interchain with G-Cter in SUMO2)" evidence="1">
    <location>
        <position position="48"/>
    </location>
</feature>
<feature type="cross-link" description="Glycyl lysine isopeptide (Lys-Gly) (interchain with G-Cter in SUMO2)" evidence="1">
    <location>
        <position position="154"/>
    </location>
</feature>
<feature type="cross-link" description="Glycyl lysine isopeptide (Lys-Gly) (interchain with G-Cter in SUMO2)" evidence="1">
    <location>
        <position position="165"/>
    </location>
</feature>
<feature type="cross-link" description="Glycyl lysine isopeptide (Lys-Gly) (interchain with G-Cter in SUMO2)" evidence="1">
    <location>
        <position position="174"/>
    </location>
</feature>
<protein>
    <recommendedName>
        <fullName>Histone deacetylase complex subunit SAP30L</fullName>
    </recommendedName>
    <alternativeName>
        <fullName>Sin3 corepressor complex subunit SAP30L</fullName>
    </alternativeName>
    <alternativeName>
        <fullName>Sin3-associated protein p30-like</fullName>
    </alternativeName>
</protein>
<name>SP30L_MOUSE</name>
<gene>
    <name type="primary">Sap30l</name>
</gene>
<evidence type="ECO:0000250" key="1">
    <source>
        <dbReference type="UniProtKB" id="O75446"/>
    </source>
</evidence>
<evidence type="ECO:0000250" key="2">
    <source>
        <dbReference type="UniProtKB" id="Q9HAJ7"/>
    </source>
</evidence>
<evidence type="ECO:0000255" key="3">
    <source>
        <dbReference type="PROSITE-ProRule" id="PRU00114"/>
    </source>
</evidence>
<evidence type="ECO:0000256" key="4">
    <source>
        <dbReference type="SAM" id="MobiDB-lite"/>
    </source>
</evidence>
<evidence type="ECO:0000305" key="5"/>
<evidence type="ECO:0007744" key="6">
    <source>
    </source>
</evidence>
<evidence type="ECO:0007744" key="7">
    <source>
    </source>
</evidence>
<sequence>MNGFSTEEDSREGPPAAPAAAPGYGQSCCLIADGERCVRPAGNASFSKRVQKSISQKKLKLDIDKSVRHLYICDFHKNFIQSVRNKRKRKASDDGGDSPEHDADIPEVDLFQLQVNTLRRYKRHYKLQTRPGFNKAQLAETVSRHFRNIPVNEKETLAYFIYMVKSNRSRLDQKSEGSKQLE</sequence>